<comment type="function">
    <text evidence="1">Necessary for normal cell division and for the maintenance of normal septation.</text>
</comment>
<comment type="cofactor">
    <cofactor evidence="1">
        <name>Mg(2+)</name>
        <dbReference type="ChEBI" id="CHEBI:18420"/>
    </cofactor>
</comment>
<comment type="similarity">
    <text evidence="1">Belongs to the TRAFAC class TrmE-Era-EngA-EngB-Septin-like GTPase superfamily. EngB GTPase family.</text>
</comment>
<keyword id="KW-0131">Cell cycle</keyword>
<keyword id="KW-0132">Cell division</keyword>
<keyword id="KW-0342">GTP-binding</keyword>
<keyword id="KW-0460">Magnesium</keyword>
<keyword id="KW-0479">Metal-binding</keyword>
<keyword id="KW-0547">Nucleotide-binding</keyword>
<keyword id="KW-1185">Reference proteome</keyword>
<keyword id="KW-0717">Septation</keyword>
<protein>
    <recommendedName>
        <fullName evidence="1">Probable GTP-binding protein EngB</fullName>
    </recommendedName>
</protein>
<reference key="1">
    <citation type="submission" date="2008-04" db="EMBL/GenBank/DDBJ databases">
        <title>Complete sequence of chromosome of Natranaerobius thermophilus JW/NM-WN-LF.</title>
        <authorList>
            <consortium name="US DOE Joint Genome Institute"/>
            <person name="Copeland A."/>
            <person name="Lucas S."/>
            <person name="Lapidus A."/>
            <person name="Glavina del Rio T."/>
            <person name="Dalin E."/>
            <person name="Tice H."/>
            <person name="Bruce D."/>
            <person name="Goodwin L."/>
            <person name="Pitluck S."/>
            <person name="Chertkov O."/>
            <person name="Brettin T."/>
            <person name="Detter J.C."/>
            <person name="Han C."/>
            <person name="Kuske C.R."/>
            <person name="Schmutz J."/>
            <person name="Larimer F."/>
            <person name="Land M."/>
            <person name="Hauser L."/>
            <person name="Kyrpides N."/>
            <person name="Lykidis A."/>
            <person name="Mesbah N.M."/>
            <person name="Wiegel J."/>
        </authorList>
    </citation>
    <scope>NUCLEOTIDE SEQUENCE [LARGE SCALE GENOMIC DNA]</scope>
    <source>
        <strain>ATCC BAA-1301 / DSM 18059 / JW/NM-WN-LF</strain>
    </source>
</reference>
<sequence length="193" mass="22107">MKVTNAEYMASAYLSSQFPSEMYPEISFIGRSNVGKSSLINTLINRKNLAYTSKQPGKTRTINFFLINKSLYFVDLPGYGFAKVSKTMQKDWEQLVNAYLSQRNTLKLSILIIDGRHGPKDADIDMFDYLLDFERPVLLVATKMDKVKANKRKQRITEMRSALELDQDDELITFSSATGEGKNELWQIIEDLL</sequence>
<evidence type="ECO:0000255" key="1">
    <source>
        <dbReference type="HAMAP-Rule" id="MF_00321"/>
    </source>
</evidence>
<dbReference type="EMBL" id="CP001034">
    <property type="protein sequence ID" value="ACB84688.1"/>
    <property type="molecule type" value="Genomic_DNA"/>
</dbReference>
<dbReference type="RefSeq" id="WP_012447563.1">
    <property type="nucleotide sequence ID" value="NC_010718.1"/>
</dbReference>
<dbReference type="SMR" id="B2A1E8"/>
<dbReference type="FunCoup" id="B2A1E8">
    <property type="interactions" value="257"/>
</dbReference>
<dbReference type="STRING" id="457570.Nther_1105"/>
<dbReference type="KEGG" id="nth:Nther_1105"/>
<dbReference type="eggNOG" id="COG0218">
    <property type="taxonomic scope" value="Bacteria"/>
</dbReference>
<dbReference type="HOGENOM" id="CLU_033732_3_0_9"/>
<dbReference type="InParanoid" id="B2A1E8"/>
<dbReference type="OrthoDB" id="9804921at2"/>
<dbReference type="Proteomes" id="UP000001683">
    <property type="component" value="Chromosome"/>
</dbReference>
<dbReference type="GO" id="GO:0005525">
    <property type="term" value="F:GTP binding"/>
    <property type="evidence" value="ECO:0007669"/>
    <property type="project" value="UniProtKB-UniRule"/>
</dbReference>
<dbReference type="GO" id="GO:0046872">
    <property type="term" value="F:metal ion binding"/>
    <property type="evidence" value="ECO:0007669"/>
    <property type="project" value="UniProtKB-KW"/>
</dbReference>
<dbReference type="GO" id="GO:0000917">
    <property type="term" value="P:division septum assembly"/>
    <property type="evidence" value="ECO:0007669"/>
    <property type="project" value="UniProtKB-KW"/>
</dbReference>
<dbReference type="CDD" id="cd01876">
    <property type="entry name" value="YihA_EngB"/>
    <property type="match status" value="1"/>
</dbReference>
<dbReference type="FunFam" id="3.40.50.300:FF:000098">
    <property type="entry name" value="Probable GTP-binding protein EngB"/>
    <property type="match status" value="1"/>
</dbReference>
<dbReference type="Gene3D" id="3.40.50.300">
    <property type="entry name" value="P-loop containing nucleotide triphosphate hydrolases"/>
    <property type="match status" value="1"/>
</dbReference>
<dbReference type="HAMAP" id="MF_00321">
    <property type="entry name" value="GTPase_EngB"/>
    <property type="match status" value="1"/>
</dbReference>
<dbReference type="InterPro" id="IPR030393">
    <property type="entry name" value="G_ENGB_dom"/>
</dbReference>
<dbReference type="InterPro" id="IPR006073">
    <property type="entry name" value="GTP-bd"/>
</dbReference>
<dbReference type="InterPro" id="IPR019987">
    <property type="entry name" value="GTP-bd_ribosome_bio_YsxC"/>
</dbReference>
<dbReference type="InterPro" id="IPR027417">
    <property type="entry name" value="P-loop_NTPase"/>
</dbReference>
<dbReference type="NCBIfam" id="TIGR03598">
    <property type="entry name" value="GTPase_YsxC"/>
    <property type="match status" value="1"/>
</dbReference>
<dbReference type="PANTHER" id="PTHR11649:SF13">
    <property type="entry name" value="ENGB-TYPE G DOMAIN-CONTAINING PROTEIN"/>
    <property type="match status" value="1"/>
</dbReference>
<dbReference type="PANTHER" id="PTHR11649">
    <property type="entry name" value="MSS1/TRME-RELATED GTP-BINDING PROTEIN"/>
    <property type="match status" value="1"/>
</dbReference>
<dbReference type="Pfam" id="PF01926">
    <property type="entry name" value="MMR_HSR1"/>
    <property type="match status" value="1"/>
</dbReference>
<dbReference type="SUPFAM" id="SSF52540">
    <property type="entry name" value="P-loop containing nucleoside triphosphate hydrolases"/>
    <property type="match status" value="1"/>
</dbReference>
<dbReference type="PROSITE" id="PS51706">
    <property type="entry name" value="G_ENGB"/>
    <property type="match status" value="1"/>
</dbReference>
<organism>
    <name type="scientific">Natranaerobius thermophilus (strain ATCC BAA-1301 / DSM 18059 / JW/NM-WN-LF)</name>
    <dbReference type="NCBI Taxonomy" id="457570"/>
    <lineage>
        <taxon>Bacteria</taxon>
        <taxon>Bacillati</taxon>
        <taxon>Bacillota</taxon>
        <taxon>Clostridia</taxon>
        <taxon>Natranaerobiales</taxon>
        <taxon>Natranaerobiaceae</taxon>
        <taxon>Natranaerobius</taxon>
    </lineage>
</organism>
<gene>
    <name evidence="1" type="primary">engB</name>
    <name type="ordered locus">Nther_1105</name>
</gene>
<feature type="chain" id="PRO_1000115988" description="Probable GTP-binding protein EngB">
    <location>
        <begin position="1"/>
        <end position="193"/>
    </location>
</feature>
<feature type="domain" description="EngB-type G" evidence="1">
    <location>
        <begin position="22"/>
        <end position="193"/>
    </location>
</feature>
<feature type="binding site" evidence="1">
    <location>
        <begin position="30"/>
        <end position="37"/>
    </location>
    <ligand>
        <name>GTP</name>
        <dbReference type="ChEBI" id="CHEBI:37565"/>
    </ligand>
</feature>
<feature type="binding site" evidence="1">
    <location>
        <position position="37"/>
    </location>
    <ligand>
        <name>Mg(2+)</name>
        <dbReference type="ChEBI" id="CHEBI:18420"/>
    </ligand>
</feature>
<feature type="binding site" evidence="1">
    <location>
        <begin position="57"/>
        <end position="61"/>
    </location>
    <ligand>
        <name>GTP</name>
        <dbReference type="ChEBI" id="CHEBI:37565"/>
    </ligand>
</feature>
<feature type="binding site" evidence="1">
    <location>
        <position position="59"/>
    </location>
    <ligand>
        <name>Mg(2+)</name>
        <dbReference type="ChEBI" id="CHEBI:18420"/>
    </ligand>
</feature>
<feature type="binding site" evidence="1">
    <location>
        <begin position="75"/>
        <end position="78"/>
    </location>
    <ligand>
        <name>GTP</name>
        <dbReference type="ChEBI" id="CHEBI:37565"/>
    </ligand>
</feature>
<feature type="binding site" evidence="1">
    <location>
        <begin position="142"/>
        <end position="145"/>
    </location>
    <ligand>
        <name>GTP</name>
        <dbReference type="ChEBI" id="CHEBI:37565"/>
    </ligand>
</feature>
<feature type="binding site" evidence="1">
    <location>
        <begin position="174"/>
        <end position="176"/>
    </location>
    <ligand>
        <name>GTP</name>
        <dbReference type="ChEBI" id="CHEBI:37565"/>
    </ligand>
</feature>
<proteinExistence type="inferred from homology"/>
<accession>B2A1E8</accession>
<name>ENGB_NATTJ</name>